<organism>
    <name type="scientific">Pongo abelii</name>
    <name type="common">Sumatran orangutan</name>
    <name type="synonym">Pongo pygmaeus abelii</name>
    <dbReference type="NCBI Taxonomy" id="9601"/>
    <lineage>
        <taxon>Eukaryota</taxon>
        <taxon>Metazoa</taxon>
        <taxon>Chordata</taxon>
        <taxon>Craniata</taxon>
        <taxon>Vertebrata</taxon>
        <taxon>Euteleostomi</taxon>
        <taxon>Mammalia</taxon>
        <taxon>Eutheria</taxon>
        <taxon>Euarchontoglires</taxon>
        <taxon>Primates</taxon>
        <taxon>Haplorrhini</taxon>
        <taxon>Catarrhini</taxon>
        <taxon>Hominidae</taxon>
        <taxon>Pongo</taxon>
    </lineage>
</organism>
<gene>
    <name type="primary">PXN</name>
</gene>
<accession>Q5R7I1</accession>
<keyword id="KW-0007">Acetylation</keyword>
<keyword id="KW-0130">Cell adhesion</keyword>
<keyword id="KW-0965">Cell junction</keyword>
<keyword id="KW-0963">Cytoplasm</keyword>
<keyword id="KW-0206">Cytoskeleton</keyword>
<keyword id="KW-0440">LIM domain</keyword>
<keyword id="KW-0479">Metal-binding</keyword>
<keyword id="KW-0597">Phosphoprotein</keyword>
<keyword id="KW-1185">Reference proteome</keyword>
<keyword id="KW-0677">Repeat</keyword>
<keyword id="KW-0862">Zinc</keyword>
<name>PAXI_PONAB</name>
<dbReference type="EMBL" id="CR860135">
    <property type="protein sequence ID" value="CAH92279.1"/>
    <property type="molecule type" value="mRNA"/>
</dbReference>
<dbReference type="RefSeq" id="NP_001126332.1">
    <property type="nucleotide sequence ID" value="NM_001132860.1"/>
</dbReference>
<dbReference type="SMR" id="Q5R7I1"/>
<dbReference type="FunCoup" id="Q5R7I1">
    <property type="interactions" value="739"/>
</dbReference>
<dbReference type="eggNOG" id="KOG1703">
    <property type="taxonomic scope" value="Eukaryota"/>
</dbReference>
<dbReference type="InParanoid" id="Q5R7I1"/>
<dbReference type="Proteomes" id="UP000001595">
    <property type="component" value="Unplaced"/>
</dbReference>
<dbReference type="GO" id="GO:0005938">
    <property type="term" value="C:cell cortex"/>
    <property type="evidence" value="ECO:0007669"/>
    <property type="project" value="UniProtKB-SubCell"/>
</dbReference>
<dbReference type="GO" id="GO:0005856">
    <property type="term" value="C:cytoskeleton"/>
    <property type="evidence" value="ECO:0007669"/>
    <property type="project" value="UniProtKB-SubCell"/>
</dbReference>
<dbReference type="GO" id="GO:0005925">
    <property type="term" value="C:focal adhesion"/>
    <property type="evidence" value="ECO:0007669"/>
    <property type="project" value="UniProtKB-SubCell"/>
</dbReference>
<dbReference type="GO" id="GO:0046872">
    <property type="term" value="F:metal ion binding"/>
    <property type="evidence" value="ECO:0007669"/>
    <property type="project" value="UniProtKB-KW"/>
</dbReference>
<dbReference type="GO" id="GO:0043542">
    <property type="term" value="P:endothelial cell migration"/>
    <property type="evidence" value="ECO:0007669"/>
    <property type="project" value="TreeGrafter"/>
</dbReference>
<dbReference type="GO" id="GO:0034446">
    <property type="term" value="P:substrate adhesion-dependent cell spreading"/>
    <property type="evidence" value="ECO:0007669"/>
    <property type="project" value="TreeGrafter"/>
</dbReference>
<dbReference type="GO" id="GO:0007179">
    <property type="term" value="P:transforming growth factor beta receptor signaling pathway"/>
    <property type="evidence" value="ECO:0007669"/>
    <property type="project" value="TreeGrafter"/>
</dbReference>
<dbReference type="CDD" id="cd09336">
    <property type="entry name" value="LIM1_Paxillin_like"/>
    <property type="match status" value="1"/>
</dbReference>
<dbReference type="CDD" id="cd09407">
    <property type="entry name" value="LIM2_Paxillin"/>
    <property type="match status" value="1"/>
</dbReference>
<dbReference type="CDD" id="cd09338">
    <property type="entry name" value="LIM3_Paxillin_like"/>
    <property type="match status" value="1"/>
</dbReference>
<dbReference type="CDD" id="cd09411">
    <property type="entry name" value="LIM4_Paxillin"/>
    <property type="match status" value="1"/>
</dbReference>
<dbReference type="FunFam" id="2.10.110.10:FF:000008">
    <property type="entry name" value="Paxillin isoform 1"/>
    <property type="match status" value="1"/>
</dbReference>
<dbReference type="FunFam" id="2.10.110.10:FF:000009">
    <property type="entry name" value="Paxillin isoform 1"/>
    <property type="match status" value="1"/>
</dbReference>
<dbReference type="FunFam" id="2.10.110.10:FF:000012">
    <property type="entry name" value="Paxillin isoform 1"/>
    <property type="match status" value="1"/>
</dbReference>
<dbReference type="FunFam" id="2.10.110.10:FF:000018">
    <property type="entry name" value="Paxillin isoform 1"/>
    <property type="match status" value="1"/>
</dbReference>
<dbReference type="Gene3D" id="2.10.110.10">
    <property type="entry name" value="Cysteine Rich Protein"/>
    <property type="match status" value="4"/>
</dbReference>
<dbReference type="InterPro" id="IPR047072">
    <property type="entry name" value="Paxillin_Lim_dom2"/>
</dbReference>
<dbReference type="InterPro" id="IPR001904">
    <property type="entry name" value="Paxillin_Lim_dom4"/>
</dbReference>
<dbReference type="InterPro" id="IPR047075">
    <property type="entry name" value="Paxillin_TGFB1I1_LIM_dom1"/>
</dbReference>
<dbReference type="InterPro" id="IPR001781">
    <property type="entry name" value="Znf_LIM"/>
</dbReference>
<dbReference type="PANTHER" id="PTHR24216:SF11">
    <property type="entry name" value="PAXILLIN"/>
    <property type="match status" value="1"/>
</dbReference>
<dbReference type="PANTHER" id="PTHR24216">
    <property type="entry name" value="PAXILLIN-RELATED"/>
    <property type="match status" value="1"/>
</dbReference>
<dbReference type="Pfam" id="PF00412">
    <property type="entry name" value="LIM"/>
    <property type="match status" value="4"/>
</dbReference>
<dbReference type="Pfam" id="PF03535">
    <property type="entry name" value="Paxillin"/>
    <property type="match status" value="1"/>
</dbReference>
<dbReference type="PRINTS" id="PR00832">
    <property type="entry name" value="PAXILLIN"/>
</dbReference>
<dbReference type="SMART" id="SM00132">
    <property type="entry name" value="LIM"/>
    <property type="match status" value="4"/>
</dbReference>
<dbReference type="SUPFAM" id="SSF57716">
    <property type="entry name" value="Glucocorticoid receptor-like (DNA-binding domain)"/>
    <property type="match status" value="5"/>
</dbReference>
<dbReference type="PROSITE" id="PS00478">
    <property type="entry name" value="LIM_DOMAIN_1"/>
    <property type="match status" value="4"/>
</dbReference>
<dbReference type="PROSITE" id="PS50023">
    <property type="entry name" value="LIM_DOMAIN_2"/>
    <property type="match status" value="4"/>
</dbReference>
<proteinExistence type="evidence at transcript level"/>
<sequence length="591" mass="64515">MDDLDALLADLESTTSHISKRPVFLSEETPYSYPTGNHTYQEIAVPPPVPPPPSSEALNGTILDPLDQWQPSGSRFIHQQPQSSSPVYGSSAKTSSVSNPQDGVGSPCSRVGEEEHVYSFPNKQKSAESSPTVMSTSLGSNLSELDRLLLELNAVQHNPPGFPADEANSGPPLPGALSPHYGVPETNSPLGGKAGPLTKEKPKRNGGRGLEDVRPSVESLLDELESSVPSPVPAITVNQGEMSSPQRVTSTQQQTRISASSATRELDELMASLSDFRIQGLEQRADGERCWAADWPRDGGRSSPGGQDEGGFMAQGKTGSSSPPGGPPKPGSQLDSMLGSLQSDLNKLGVATVAKGVCGACKKPIAGQVVTAMGKTWHPEHFVCTHCQEEIGSRNFFERDGQPYCEKDYHNLFSPRCYYCNGPILDKVVTALDRTWHPEHFFCAQCGAFFGPEGFHEKDGKAYCRKDYFDMFAPKCGGCARAILENYISALNTLWHPECFVCRECFTPFVNGSFFEHDGQPYCEVHYHERRGSLCSGCQKPITGRCITAMAKKFHPEHFVCAFCLKQLNKGTFKEQNDKPYCQNCFLKLFC</sequence>
<reference key="1">
    <citation type="submission" date="2004-11" db="EMBL/GenBank/DDBJ databases">
        <authorList>
            <consortium name="The German cDNA consortium"/>
        </authorList>
    </citation>
    <scope>NUCLEOTIDE SEQUENCE [LARGE SCALE MRNA]</scope>
    <source>
        <tissue>Kidney</tissue>
    </source>
</reference>
<evidence type="ECO:0000250" key="1"/>
<evidence type="ECO:0000250" key="2">
    <source>
        <dbReference type="UniProtKB" id="P49023"/>
    </source>
</evidence>
<evidence type="ECO:0000250" key="3">
    <source>
        <dbReference type="UniProtKB" id="Q66H76"/>
    </source>
</evidence>
<evidence type="ECO:0000250" key="4">
    <source>
        <dbReference type="UniProtKB" id="Q8VI36"/>
    </source>
</evidence>
<evidence type="ECO:0000255" key="5">
    <source>
        <dbReference type="PROSITE-ProRule" id="PRU00125"/>
    </source>
</evidence>
<evidence type="ECO:0000256" key="6">
    <source>
        <dbReference type="SAM" id="MobiDB-lite"/>
    </source>
</evidence>
<evidence type="ECO:0000305" key="7"/>
<feature type="chain" id="PRO_0000075855" description="Paxillin">
    <location>
        <begin position="1"/>
        <end position="591"/>
    </location>
</feature>
<feature type="domain" description="LIM zinc-binding 1" evidence="5">
    <location>
        <begin position="356"/>
        <end position="415"/>
    </location>
</feature>
<feature type="domain" description="LIM zinc-binding 2" evidence="5">
    <location>
        <begin position="416"/>
        <end position="473"/>
    </location>
</feature>
<feature type="domain" description="LIM zinc-binding 3" evidence="5">
    <location>
        <begin position="474"/>
        <end position="533"/>
    </location>
</feature>
<feature type="domain" description="LIM zinc-binding 4" evidence="5">
    <location>
        <begin position="534"/>
        <end position="591"/>
    </location>
</feature>
<feature type="region of interest" description="Disordered" evidence="6">
    <location>
        <begin position="17"/>
        <end position="138"/>
    </location>
</feature>
<feature type="region of interest" description="Disordered" evidence="6">
    <location>
        <begin position="156"/>
        <end position="213"/>
    </location>
</feature>
<feature type="region of interest" description="Disordered" evidence="6">
    <location>
        <begin position="237"/>
        <end position="260"/>
    </location>
</feature>
<feature type="region of interest" description="Disordered" evidence="6">
    <location>
        <begin position="289"/>
        <end position="335"/>
    </location>
</feature>
<feature type="short sequence motif" description="LD motif 1">
    <location>
        <begin position="3"/>
        <end position="15"/>
    </location>
</feature>
<feature type="short sequence motif" description="LD motif 2">
    <location>
        <begin position="144"/>
        <end position="156"/>
    </location>
</feature>
<feature type="short sequence motif" description="LD motif 3">
    <location>
        <begin position="216"/>
        <end position="228"/>
    </location>
</feature>
<feature type="short sequence motif" description="LD motif 4">
    <location>
        <begin position="265"/>
        <end position="276"/>
    </location>
</feature>
<feature type="short sequence motif" description="LD motif 5">
    <location>
        <begin position="333"/>
        <end position="345"/>
    </location>
</feature>
<feature type="compositionally biased region" description="Pro residues" evidence="6">
    <location>
        <begin position="45"/>
        <end position="54"/>
    </location>
</feature>
<feature type="compositionally biased region" description="Polar residues" evidence="6">
    <location>
        <begin position="69"/>
        <end position="101"/>
    </location>
</feature>
<feature type="compositionally biased region" description="Polar residues" evidence="6">
    <location>
        <begin position="121"/>
        <end position="137"/>
    </location>
</feature>
<feature type="compositionally biased region" description="Basic and acidic residues" evidence="6">
    <location>
        <begin position="289"/>
        <end position="300"/>
    </location>
</feature>
<feature type="modified residue" description="N-acetylmethionine" evidence="2">
    <location>
        <position position="1"/>
    </location>
</feature>
<feature type="modified residue" description="Phosphotyrosine; by PTK6" evidence="2">
    <location>
        <position position="31"/>
    </location>
</feature>
<feature type="modified residue" description="Phosphoserine" evidence="4">
    <location>
        <position position="83"/>
    </location>
</feature>
<feature type="modified residue" description="Phosphoserine" evidence="2">
    <location>
        <position position="85"/>
    </location>
</feature>
<feature type="modified residue" description="Phosphotyrosine" evidence="4">
    <location>
        <position position="88"/>
    </location>
</feature>
<feature type="modified residue" description="Phosphoserine" evidence="2">
    <location>
        <position position="106"/>
    </location>
</feature>
<feature type="modified residue" description="Phosphotyrosine; by PTK6" evidence="2">
    <location>
        <position position="118"/>
    </location>
</feature>
<feature type="modified residue" description="Phosphoserine" evidence="2">
    <location>
        <position position="119"/>
    </location>
</feature>
<feature type="modified residue" description="Phosphoserine" evidence="2">
    <location>
        <position position="126"/>
    </location>
</feature>
<feature type="modified residue" description="Phosphoserine" evidence="2">
    <location>
        <position position="130"/>
    </location>
</feature>
<feature type="modified residue" description="Phosphothreonine" evidence="4">
    <location>
        <position position="132"/>
    </location>
</feature>
<feature type="modified residue" description="Phosphoserine" evidence="2">
    <location>
        <position position="137"/>
    </location>
</feature>
<feature type="modified residue" description="Phosphoserine" evidence="4">
    <location>
        <position position="140"/>
    </location>
</feature>
<feature type="modified residue" description="Phosphoserine" evidence="2">
    <location>
        <position position="143"/>
    </location>
</feature>
<feature type="modified residue" description="Phosphotyrosine" evidence="2">
    <location>
        <position position="181"/>
    </location>
</feature>
<feature type="modified residue" description="Phosphoserine" evidence="3">
    <location>
        <position position="230"/>
    </location>
</feature>
<feature type="modified residue" description="Phosphoserine; by CDK5" evidence="2">
    <location>
        <position position="244"/>
    </location>
</feature>
<feature type="modified residue" description="Phosphoserine" evidence="2">
    <location>
        <position position="250"/>
    </location>
</feature>
<feature type="modified residue" description="Phosphoserine" evidence="3">
    <location>
        <position position="258"/>
    </location>
</feature>
<feature type="modified residue" description="Phosphoserine" evidence="3">
    <location>
        <position position="261"/>
    </location>
</feature>
<feature type="modified residue" description="Phosphoserine" evidence="2">
    <location>
        <position position="272"/>
    </location>
</feature>
<feature type="modified residue" description="Phosphoserine" evidence="2">
    <location>
        <position position="303"/>
    </location>
</feature>
<feature type="modified residue" description="Phosphoserine" evidence="2">
    <location>
        <position position="322"/>
    </location>
</feature>
<feature type="modified residue" description="Phosphoserine" evidence="3">
    <location>
        <position position="332"/>
    </location>
</feature>
<feature type="modified residue" description="Phosphoserine" evidence="4">
    <location>
        <position position="340"/>
    </location>
</feature>
<feature type="modified residue" description="Phosphoserine" evidence="2">
    <location>
        <position position="533"/>
    </location>
</feature>
<comment type="function">
    <text evidence="2">Cytoskeletal protein involved in actin-membrane attachment at sites of cell adhesion to the extracellular matrix (focal adhesion). Recruits other proteins such as TRIM15 to focal adhesion.</text>
</comment>
<comment type="subunit">
    <text evidence="1 2">Binds to vinculin and to the SH3 domain of SRC. Interacts with GIT1, NUDT16L1/SDOS, PARVA, PARVB, SORBS1 and TGFB1I1. Component of cytoplasmic complexes, which also contain GIT1, ARHGEF6 and PAK1. Binds ASAP2. Interacts with RNF5 and PDCD10 (By similarity). Interacts with NEK3 and this interaction is prolactin-dependent (By similarity). Interacts with PTK2/FAK1 and PTK2B/PYK2 (By similarity). Interacts with PTK6 (By similarity). Interacts with CD36. Interacts (via cytoplasmic domain) with CEACAM1; the interaction is phosphotyrosyl-dependent (By similarity). Interacts with PXN; this complex stabilizes actin dynamics (By similarity). Interacts with TRIM15 (By similarity). Interacts with PAK4; PAK4 acts as a scaffold to suppport PAXI phosphorylation at Ser-272 (By similarity).</text>
</comment>
<comment type="subcellular location">
    <subcellularLocation>
        <location evidence="2">Cytoplasm</location>
        <location evidence="2">Cytoskeleton</location>
    </subcellularLocation>
    <subcellularLocation>
        <location evidence="2">Cell junction</location>
        <location evidence="2">Focal adhesion</location>
    </subcellularLocation>
    <subcellularLocation>
        <location evidence="4">Cytoplasm</location>
        <location evidence="4">Cell cortex</location>
    </subcellularLocation>
    <text evidence="2">Colocalizes with integrins at the cell periphery. Colocalizes with PXN to membrane ruffles and the leading edge of migrating cells (By similarity).</text>
</comment>
<comment type="PTM">
    <text evidence="2">Phosphorylated by MAPK1/ERK2 (By similarity). Phosphorylated on tyrosine residues during integrin-mediated cell adhesion, embryonic development, fibroblast transformation and following stimulation of cells by mitogens. Phosphorylation at Ser-244 by CDK5 reduces its interaction with PTK2/FAK1 in matrix-cell focal adhesions (MCFA) during oligodendrocytes (OLs) differentiation (By similarity). Phosphorylation at Tyr-31 and Tyr-118 by PTK6 promote the activation of RAC1 via CRK/CrKII, thereby promoting migration and invasion (By similarity). Phosphorylation at Ser-250 by SLK is required for PXN redistribution and cell motility (By similarity). Phosphorylation at Ser-272 promotes focal adhesion disassembly during cell migration (By similarity).</text>
</comment>
<comment type="similarity">
    <text evidence="7">Belongs to the paxillin family.</text>
</comment>
<protein>
    <recommendedName>
        <fullName>Paxillin</fullName>
    </recommendedName>
</protein>